<organism>
    <name type="scientific">Chelativorans sp. (strain BNC1)</name>
    <dbReference type="NCBI Taxonomy" id="266779"/>
    <lineage>
        <taxon>Bacteria</taxon>
        <taxon>Pseudomonadati</taxon>
        <taxon>Pseudomonadota</taxon>
        <taxon>Alphaproteobacteria</taxon>
        <taxon>Hyphomicrobiales</taxon>
        <taxon>Phyllobacteriaceae</taxon>
        <taxon>Chelativorans</taxon>
    </lineage>
</organism>
<accession>Q11E20</accession>
<keyword id="KW-0963">Cytoplasm</keyword>
<keyword id="KW-0369">Histidine metabolism</keyword>
<keyword id="KW-0456">Lyase</keyword>
<keyword id="KW-0520">NAD</keyword>
<gene>
    <name evidence="1" type="primary">hutU</name>
    <name type="ordered locus">Meso_2983</name>
</gene>
<evidence type="ECO:0000255" key="1">
    <source>
        <dbReference type="HAMAP-Rule" id="MF_00577"/>
    </source>
</evidence>
<feature type="chain" id="PRO_1000025133" description="Urocanate hydratase">
    <location>
        <begin position="1"/>
        <end position="562"/>
    </location>
</feature>
<feature type="active site" evidence="1">
    <location>
        <position position="415"/>
    </location>
</feature>
<feature type="binding site" evidence="1">
    <location>
        <begin position="53"/>
        <end position="54"/>
    </location>
    <ligand>
        <name>NAD(+)</name>
        <dbReference type="ChEBI" id="CHEBI:57540"/>
    </ligand>
</feature>
<feature type="binding site" evidence="1">
    <location>
        <position position="131"/>
    </location>
    <ligand>
        <name>NAD(+)</name>
        <dbReference type="ChEBI" id="CHEBI:57540"/>
    </ligand>
</feature>
<feature type="binding site" evidence="1">
    <location>
        <begin position="177"/>
        <end position="179"/>
    </location>
    <ligand>
        <name>NAD(+)</name>
        <dbReference type="ChEBI" id="CHEBI:57540"/>
    </ligand>
</feature>
<feature type="binding site" evidence="1">
    <location>
        <position position="197"/>
    </location>
    <ligand>
        <name>NAD(+)</name>
        <dbReference type="ChEBI" id="CHEBI:57540"/>
    </ligand>
</feature>
<feature type="binding site" evidence="1">
    <location>
        <position position="202"/>
    </location>
    <ligand>
        <name>NAD(+)</name>
        <dbReference type="ChEBI" id="CHEBI:57540"/>
    </ligand>
</feature>
<feature type="binding site" evidence="1">
    <location>
        <begin position="243"/>
        <end position="244"/>
    </location>
    <ligand>
        <name>NAD(+)</name>
        <dbReference type="ChEBI" id="CHEBI:57540"/>
    </ligand>
</feature>
<feature type="binding site" evidence="1">
    <location>
        <begin position="268"/>
        <end position="272"/>
    </location>
    <ligand>
        <name>NAD(+)</name>
        <dbReference type="ChEBI" id="CHEBI:57540"/>
    </ligand>
</feature>
<feature type="binding site" evidence="1">
    <location>
        <begin position="278"/>
        <end position="279"/>
    </location>
    <ligand>
        <name>NAD(+)</name>
        <dbReference type="ChEBI" id="CHEBI:57540"/>
    </ligand>
</feature>
<feature type="binding site" evidence="1">
    <location>
        <position position="327"/>
    </location>
    <ligand>
        <name>NAD(+)</name>
        <dbReference type="ChEBI" id="CHEBI:57540"/>
    </ligand>
</feature>
<feature type="binding site" evidence="1">
    <location>
        <position position="497"/>
    </location>
    <ligand>
        <name>NAD(+)</name>
        <dbReference type="ChEBI" id="CHEBI:57540"/>
    </ligand>
</feature>
<protein>
    <recommendedName>
        <fullName evidence="1">Urocanate hydratase</fullName>
        <shortName evidence="1">Urocanase</shortName>
        <ecNumber evidence="1">4.2.1.49</ecNumber>
    </recommendedName>
    <alternativeName>
        <fullName evidence="1">Imidazolonepropionate hydrolase</fullName>
    </alternativeName>
</protein>
<sequence length="562" mass="61533">MNMNPRHNIREIRAPRGPELSAKSWMTEAPLRMLMNNLDPDVAENPHELVVYGGIGRAARTWEDFDRITAALKTLSEEETLLVQSGKPVGVFRTHKDAPRVLIANSNLVPHWATWDHFNELDKKGLAMYGQMTAGSWIYIGTQGIVQGTYETFVEAGRQHYDGNLKGKWILTGGLGGMGGAQPLAAVMAGACCLAVECDETRIDFRLRTRYVDAKARTLDEALAMIDMWTKAGEAKSVGLLGNAAEIFPELVRRMKAGGPRPDIVTDQTSAHDPRNGYLPVGWTVEEARAKRESDPKSVEIAARASMRAQVEAMVAFWDAGIPTLDYGNNIRQVAKDEGLENAFAFPGFVPAYIRPLFCRGIGPFRWAALSGDPEDIYKTDAKVKELLPDNKHLHNWLDMAKERISFQGLPARICWVGLGDRQKLGLAFNEMVRNGELSAPIVIGRDHLDSGSVASPNRETEAMKDGSDAVSDWPLLNALLNTASGATWVSLHHGGGVGMGFSQHAGMVICADGSEDANRRLERVLWNDPATGVMRHADAGYEIAVDCAKEKGLRLPGILGN</sequence>
<dbReference type="EC" id="4.2.1.49" evidence="1"/>
<dbReference type="EMBL" id="CP000390">
    <property type="protein sequence ID" value="ABG64355.1"/>
    <property type="molecule type" value="Genomic_DNA"/>
</dbReference>
<dbReference type="SMR" id="Q11E20"/>
<dbReference type="STRING" id="266779.Meso_2983"/>
<dbReference type="KEGG" id="mes:Meso_2983"/>
<dbReference type="eggNOG" id="COG2987">
    <property type="taxonomic scope" value="Bacteria"/>
</dbReference>
<dbReference type="HOGENOM" id="CLU_018868_0_1_5"/>
<dbReference type="OrthoDB" id="9764874at2"/>
<dbReference type="UniPathway" id="UPA00379">
    <property type="reaction ID" value="UER00550"/>
</dbReference>
<dbReference type="GO" id="GO:0005737">
    <property type="term" value="C:cytoplasm"/>
    <property type="evidence" value="ECO:0007669"/>
    <property type="project" value="UniProtKB-SubCell"/>
</dbReference>
<dbReference type="GO" id="GO:0016153">
    <property type="term" value="F:urocanate hydratase activity"/>
    <property type="evidence" value="ECO:0007669"/>
    <property type="project" value="UniProtKB-UniRule"/>
</dbReference>
<dbReference type="GO" id="GO:0019556">
    <property type="term" value="P:L-histidine catabolic process to glutamate and formamide"/>
    <property type="evidence" value="ECO:0007669"/>
    <property type="project" value="UniProtKB-UniPathway"/>
</dbReference>
<dbReference type="GO" id="GO:0019557">
    <property type="term" value="P:L-histidine catabolic process to glutamate and formate"/>
    <property type="evidence" value="ECO:0007669"/>
    <property type="project" value="UniProtKB-UniPathway"/>
</dbReference>
<dbReference type="FunFam" id="3.40.50.10730:FF:000001">
    <property type="entry name" value="Urocanate hydratase"/>
    <property type="match status" value="1"/>
</dbReference>
<dbReference type="Gene3D" id="3.40.50.10730">
    <property type="entry name" value="Urocanase like domains"/>
    <property type="match status" value="1"/>
</dbReference>
<dbReference type="Gene3D" id="3.40.1770.10">
    <property type="entry name" value="Urocanase superfamily"/>
    <property type="match status" value="1"/>
</dbReference>
<dbReference type="HAMAP" id="MF_00577">
    <property type="entry name" value="HutU"/>
    <property type="match status" value="1"/>
</dbReference>
<dbReference type="InterPro" id="IPR055351">
    <property type="entry name" value="Urocanase"/>
</dbReference>
<dbReference type="InterPro" id="IPR023637">
    <property type="entry name" value="Urocanase-like"/>
</dbReference>
<dbReference type="InterPro" id="IPR035401">
    <property type="entry name" value="Urocanase_C"/>
</dbReference>
<dbReference type="InterPro" id="IPR038364">
    <property type="entry name" value="Urocanase_central_sf"/>
</dbReference>
<dbReference type="InterPro" id="IPR023636">
    <property type="entry name" value="Urocanase_CS"/>
</dbReference>
<dbReference type="InterPro" id="IPR035400">
    <property type="entry name" value="Urocanase_N"/>
</dbReference>
<dbReference type="InterPro" id="IPR035085">
    <property type="entry name" value="Urocanase_Rossmann-like"/>
</dbReference>
<dbReference type="InterPro" id="IPR036190">
    <property type="entry name" value="Urocanase_sf"/>
</dbReference>
<dbReference type="NCBIfam" id="TIGR01228">
    <property type="entry name" value="hutU"/>
    <property type="match status" value="1"/>
</dbReference>
<dbReference type="NCBIfam" id="NF003820">
    <property type="entry name" value="PRK05414.1"/>
    <property type="match status" value="1"/>
</dbReference>
<dbReference type="PANTHER" id="PTHR12216">
    <property type="entry name" value="UROCANATE HYDRATASE"/>
    <property type="match status" value="1"/>
</dbReference>
<dbReference type="PANTHER" id="PTHR12216:SF4">
    <property type="entry name" value="UROCANATE HYDRATASE"/>
    <property type="match status" value="1"/>
</dbReference>
<dbReference type="Pfam" id="PF01175">
    <property type="entry name" value="Urocanase"/>
    <property type="match status" value="1"/>
</dbReference>
<dbReference type="Pfam" id="PF17392">
    <property type="entry name" value="Urocanase_C"/>
    <property type="match status" value="1"/>
</dbReference>
<dbReference type="Pfam" id="PF17391">
    <property type="entry name" value="Urocanase_N"/>
    <property type="match status" value="1"/>
</dbReference>
<dbReference type="PIRSF" id="PIRSF001423">
    <property type="entry name" value="Urocanate_hydrat"/>
    <property type="match status" value="1"/>
</dbReference>
<dbReference type="SUPFAM" id="SSF111326">
    <property type="entry name" value="Urocanase"/>
    <property type="match status" value="1"/>
</dbReference>
<dbReference type="PROSITE" id="PS01233">
    <property type="entry name" value="UROCANASE"/>
    <property type="match status" value="1"/>
</dbReference>
<comment type="function">
    <text evidence="1">Catalyzes the conversion of urocanate to 4-imidazolone-5-propionate.</text>
</comment>
<comment type="catalytic activity">
    <reaction evidence="1">
        <text>4-imidazolone-5-propanoate = trans-urocanate + H2O</text>
        <dbReference type="Rhea" id="RHEA:13101"/>
        <dbReference type="ChEBI" id="CHEBI:15377"/>
        <dbReference type="ChEBI" id="CHEBI:17771"/>
        <dbReference type="ChEBI" id="CHEBI:77893"/>
        <dbReference type="EC" id="4.2.1.49"/>
    </reaction>
</comment>
<comment type="cofactor">
    <cofactor evidence="1">
        <name>NAD(+)</name>
        <dbReference type="ChEBI" id="CHEBI:57540"/>
    </cofactor>
    <text evidence="1">Binds 1 NAD(+) per subunit.</text>
</comment>
<comment type="pathway">
    <text evidence="1">Amino-acid degradation; L-histidine degradation into L-glutamate; N-formimidoyl-L-glutamate from L-histidine: step 2/3.</text>
</comment>
<comment type="subcellular location">
    <subcellularLocation>
        <location evidence="1">Cytoplasm</location>
    </subcellularLocation>
</comment>
<comment type="similarity">
    <text evidence="1">Belongs to the urocanase family.</text>
</comment>
<name>HUTU_CHESB</name>
<proteinExistence type="inferred from homology"/>
<reference key="1">
    <citation type="submission" date="2006-06" db="EMBL/GenBank/DDBJ databases">
        <title>Complete sequence of chromosome of Mesorhizobium sp. BNC1.</title>
        <authorList>
            <consortium name="US DOE Joint Genome Institute"/>
            <person name="Copeland A."/>
            <person name="Lucas S."/>
            <person name="Lapidus A."/>
            <person name="Barry K."/>
            <person name="Detter J.C."/>
            <person name="Glavina del Rio T."/>
            <person name="Hammon N."/>
            <person name="Israni S."/>
            <person name="Dalin E."/>
            <person name="Tice H."/>
            <person name="Pitluck S."/>
            <person name="Chertkov O."/>
            <person name="Brettin T."/>
            <person name="Bruce D."/>
            <person name="Han C."/>
            <person name="Tapia R."/>
            <person name="Gilna P."/>
            <person name="Schmutz J."/>
            <person name="Larimer F."/>
            <person name="Land M."/>
            <person name="Hauser L."/>
            <person name="Kyrpides N."/>
            <person name="Mikhailova N."/>
            <person name="Richardson P."/>
        </authorList>
    </citation>
    <scope>NUCLEOTIDE SEQUENCE [LARGE SCALE GENOMIC DNA]</scope>
    <source>
        <strain>BNC1</strain>
    </source>
</reference>